<comment type="function">
    <molecule>Hexon-linking protein-N</molecule>
    <text evidence="1">Structural component of the virion that acts as a cement protein on the capsid interior and which glue the peripentonal hexons and group-of-nine hexons together.</text>
</comment>
<comment type="function">
    <molecule>Hexon-linking protein-C</molecule>
    <text evidence="1">Structural component of the virion that acts as a cement protein on the capsid interior and which glue the peripentonal hexons and group-of-nine hexons together.</text>
</comment>
<comment type="subunit">
    <text evidence="1">Interacts with the peripentonal hexons as well as the hexons in the facets. Part of a complex composed of the core-capsid bridging protein, the endosome lysis protein VI and the hexon-linking protein VIII; these interactions bridge the virus core to the capsid.</text>
</comment>
<comment type="subcellular location">
    <molecule>Hexon-linking protein-C</molecule>
    <subcellularLocation>
        <location evidence="1">Virion</location>
    </subcellularLocation>
    <text evidence="1">Located on the inner side of the capsid shell. Present in 120 copies per virion.</text>
</comment>
<comment type="subcellular location">
    <molecule>Pre-hexon-linking protein VIII</molecule>
    <subcellularLocation>
        <location evidence="1">Host nucleus</location>
    </subcellularLocation>
</comment>
<comment type="subcellular location">
    <molecule>Hexon-linking protein-N</molecule>
    <subcellularLocation>
        <location evidence="1">Virion</location>
    </subcellularLocation>
    <text evidence="1">Located on the inner side of the capsid shell. Present in 120 copies per virion.</text>
</comment>
<comment type="induction">
    <text evidence="1">Expressed in the late phase of the viral replicative cycle.</text>
</comment>
<comment type="PTM">
    <text evidence="1">Cleaved by the viral protease during virion maturation. May cause the middle segment to be shed from the capsid.</text>
</comment>
<comment type="miscellaneous">
    <text evidence="1">All late proteins expressed from the major late promoter are produced by alternative splicing and alternative polyadenylation of the same gene giving rise to non-overlapping ORFs. A leader sequence is present in the N-terminus of all these mRNAs and is recognized by the viral shutoff protein to provide expression although conventional translation via ribosome scanning from the cap has been shut off in the host cell.</text>
</comment>
<comment type="similarity">
    <text evidence="1 3">Belongs to the adenoviridae hexon-linking protein family.</text>
</comment>
<reference key="1">
    <citation type="journal article" date="1979" name="Gene">
        <title>Nucleotide sequence of the EcoRI-F fragment of adenovirus 2 genome.</title>
        <authorList>
            <person name="Galibert F."/>
            <person name="Herisse J."/>
            <person name="Courtois G."/>
        </authorList>
    </citation>
    <scope>NUCLEOTIDE SEQUENCE [GENOMIC DNA] OF 1-54</scope>
</reference>
<reference key="2">
    <citation type="journal article" date="1980" name="Nucleic Acids Res.">
        <title>Nucleotide sequence of the EcoRI D fragment of adenovirus 2 genome.</title>
        <authorList>
            <person name="Herisse J."/>
            <person name="Courtois G."/>
            <person name="Galibert F."/>
        </authorList>
    </citation>
    <scope>NUCLEOTIDE SEQUENCE [GENOMIC DNA] OF 54-227</scope>
</reference>
<reference key="3">
    <citation type="journal article" date="2012" name="Virology">
        <title>The phosphoproteome of the adenovirus type 2 virion.</title>
        <authorList>
            <person name="Bergstrom Lind S."/>
            <person name="Artemenko K.A."/>
            <person name="Elfineh L."/>
            <person name="Zhao Y."/>
            <person name="Bergquist J."/>
            <person name="Pettersson U."/>
        </authorList>
    </citation>
    <scope>PROTEIN SEQUENCE OF 54-66; 116-127 AND 166-179</scope>
    <scope>PHOSPHORYLATION AT THR-64; SER-118 AND SER-174</scope>
</reference>
<reference key="4">
    <citation type="journal article" date="2012" name="Viruses">
        <title>Latest insights on adenovirus structure and assembly.</title>
        <authorList>
            <person name="San Martin C."/>
        </authorList>
    </citation>
    <scope>REVIEW</scope>
</reference>
<evidence type="ECO:0000255" key="1">
    <source>
        <dbReference type="HAMAP-Rule" id="MF_04049"/>
    </source>
</evidence>
<evidence type="ECO:0000269" key="2">
    <source>
    </source>
</evidence>
<evidence type="ECO:0000305" key="3"/>
<accession>P03280</accession>
<sequence>MSKEIPTPYMWSYQPQMGLAAGAAQDYSTRINYMSAGPHMISRVNGIRAHRNRILLEQAAITTTPRNNLNPRSWPAALVYQESPAPTTVVLPRDAQAEVQMTNSGAQLAGGFRHRVRSPGQGITHLKIRGRGIQLNDESVSSSLGLRPDGTFQIGGAGRSSFTPRQAILTLQTSSSEPRSGGIGTLQFIEEFVPSVYFNPFSGPPGHYPDQFIPNFDAVKDSADGYD</sequence>
<feature type="chain" id="PRO_0000421075" description="Pre-hexon-linking protein VIII" evidence="1">
    <location>
        <begin position="1"/>
        <end position="227"/>
    </location>
</feature>
<feature type="peptide" id="PRO_0000036491" description="Hexon-linking protein-N" evidence="1">
    <location>
        <begin position="1"/>
        <end position="111"/>
    </location>
</feature>
<feature type="propeptide" id="PRO_0000421076" evidence="1">
    <location>
        <begin position="112"/>
        <end position="157"/>
    </location>
</feature>
<feature type="peptide" id="PRO_0000036492" description="Hexon-linking protein-C" evidence="1">
    <location>
        <begin position="158"/>
        <end position="227"/>
    </location>
</feature>
<feature type="site" description="Cleavage; by viral protease" evidence="1">
    <location>
        <begin position="111"/>
        <end position="112"/>
    </location>
</feature>
<feature type="site" description="Cleavage; by viral protease" evidence="1">
    <location>
        <begin position="157"/>
        <end position="158"/>
    </location>
</feature>
<feature type="modified residue" description="Phosphothreonine; by host" evidence="1 2">
    <location>
        <position position="64"/>
    </location>
</feature>
<feature type="modified residue" description="Phosphoserine; by host" evidence="1 2">
    <location>
        <position position="118"/>
    </location>
</feature>
<feature type="modified residue" description="Phosphoserine; by host" evidence="1 2">
    <location>
        <position position="174"/>
    </location>
</feature>
<protein>
    <recommendedName>
        <fullName evidence="1">Pre-hexon-linking protein VIII</fullName>
    </recommendedName>
    <alternativeName>
        <fullName evidence="1">Pre-protein VIII</fullName>
        <shortName evidence="1">pVIII</shortName>
    </alternativeName>
    <component>
        <recommendedName>
            <fullName evidence="1">Hexon-linking protein-N</fullName>
        </recommendedName>
        <alternativeName>
            <fullName evidence="1">12.1 kDa protein VIII</fullName>
        </alternativeName>
        <alternativeName>
            <fullName evidence="1">Protein VIII-N</fullName>
        </alternativeName>
    </component>
    <component>
        <recommendedName>
            <fullName evidence="1">Hexon-linking protein-C</fullName>
        </recommendedName>
        <alternativeName>
            <fullName evidence="1">7.6 kDa protein VIII</fullName>
        </alternativeName>
        <alternativeName>
            <fullName evidence="1">Protein VIII-C</fullName>
        </alternativeName>
    </component>
</protein>
<keyword id="KW-0167">Capsid protein</keyword>
<keyword id="KW-0903">Direct protein sequencing</keyword>
<keyword id="KW-1048">Host nucleus</keyword>
<keyword id="KW-0426">Late protein</keyword>
<keyword id="KW-0597">Phosphoprotein</keyword>
<keyword id="KW-1185">Reference proteome</keyword>
<keyword id="KW-0946">Virion</keyword>
<name>CAP8_ADE02</name>
<gene>
    <name evidence="1" type="primary">L4</name>
</gene>
<organismHost>
    <name type="scientific">Homo sapiens</name>
    <name type="common">Human</name>
    <dbReference type="NCBI Taxonomy" id="9606"/>
</organismHost>
<proteinExistence type="evidence at protein level"/>
<organism>
    <name type="scientific">Human adenovirus C serotype 2</name>
    <name type="common">HAdV-2</name>
    <name type="synonym">Human adenovirus 2</name>
    <dbReference type="NCBI Taxonomy" id="10515"/>
    <lineage>
        <taxon>Viruses</taxon>
        <taxon>Varidnaviria</taxon>
        <taxon>Bamfordvirae</taxon>
        <taxon>Preplasmiviricota</taxon>
        <taxon>Tectiliviricetes</taxon>
        <taxon>Rowavirales</taxon>
        <taxon>Adenoviridae</taxon>
        <taxon>Mastadenovirus</taxon>
        <taxon>Human mastadenovirus C</taxon>
    </lineage>
</organism>
<dbReference type="EMBL" id="J01917">
    <property type="protein sequence ID" value="AAA92220.1"/>
    <property type="molecule type" value="Genomic_DNA"/>
</dbReference>
<dbReference type="PIR" id="A91583">
    <property type="entry name" value="SXAD82"/>
</dbReference>
<dbReference type="RefSeq" id="AP_000181.1">
    <property type="nucleotide sequence ID" value="AC_000007.1"/>
</dbReference>
<dbReference type="RefSeq" id="NP_040530.1">
    <property type="nucleotide sequence ID" value="NC_001405.1"/>
</dbReference>
<dbReference type="SMR" id="P03280"/>
<dbReference type="iPTMnet" id="P03280"/>
<dbReference type="GeneID" id="2653005"/>
<dbReference type="Proteomes" id="UP000008167">
    <property type="component" value="Segment"/>
</dbReference>
<dbReference type="GO" id="GO:0042025">
    <property type="term" value="C:host cell nucleus"/>
    <property type="evidence" value="ECO:0007669"/>
    <property type="project" value="UniProtKB-SubCell"/>
</dbReference>
<dbReference type="GO" id="GO:0019028">
    <property type="term" value="C:viral capsid"/>
    <property type="evidence" value="ECO:0007669"/>
    <property type="project" value="UniProtKB-UniRule"/>
</dbReference>
<dbReference type="GO" id="GO:0031423">
    <property type="term" value="F:hexon binding"/>
    <property type="evidence" value="ECO:0007669"/>
    <property type="project" value="InterPro"/>
</dbReference>
<dbReference type="Gene3D" id="6.10.250.1460">
    <property type="match status" value="1"/>
</dbReference>
<dbReference type="HAMAP" id="MF_04049">
    <property type="entry name" value="ADV_CAP8"/>
    <property type="match status" value="1"/>
</dbReference>
<dbReference type="InterPro" id="IPR000646">
    <property type="entry name" value="Adeno_PVIII"/>
</dbReference>
<dbReference type="Pfam" id="PF01310">
    <property type="entry name" value="Adeno_PVIII"/>
    <property type="match status" value="1"/>
</dbReference>